<feature type="signal peptide" evidence="3">
    <location>
        <begin position="1"/>
        <end position="17"/>
    </location>
</feature>
<feature type="chain" id="PRO_5000650631" description="L-cysteine S-thiosulfotransferase subunit SoxA">
    <location>
        <begin position="18"/>
        <end position="253"/>
    </location>
</feature>
<feature type="domain" description="Cytochrome c" evidence="4">
    <location>
        <begin position="44"/>
        <end position="129"/>
    </location>
</feature>
<feature type="active site" description="Cysteine persulfide intermediate" evidence="2">
    <location>
        <position position="214"/>
    </location>
</feature>
<feature type="binding site" description="covalent" evidence="2 4">
    <location>
        <position position="64"/>
    </location>
    <ligand>
        <name>heme c</name>
        <dbReference type="ChEBI" id="CHEBI:61717"/>
        <label>1</label>
    </ligand>
</feature>
<feature type="binding site" description="covalent" evidence="2 4">
    <location>
        <position position="67"/>
    </location>
    <ligand>
        <name>heme c</name>
        <dbReference type="ChEBI" id="CHEBI:61717"/>
        <label>1</label>
    </ligand>
</feature>
<feature type="binding site" description="axial binding residue" evidence="2 4">
    <location>
        <position position="68"/>
    </location>
    <ligand>
        <name>heme c</name>
        <dbReference type="ChEBI" id="CHEBI:61717"/>
        <label>1</label>
    </ligand>
    <ligandPart>
        <name>Fe</name>
        <dbReference type="ChEBI" id="CHEBI:18248"/>
    </ligandPart>
</feature>
<feature type="binding site" description="axial binding residue" evidence="2 4">
    <location>
        <position position="102"/>
    </location>
    <ligand>
        <name>heme c</name>
        <dbReference type="ChEBI" id="CHEBI:61717"/>
        <label>1</label>
    </ligand>
    <ligandPart>
        <name>Fe</name>
        <dbReference type="ChEBI" id="CHEBI:18248"/>
    </ligandPart>
</feature>
<feature type="binding site" description="covalent" evidence="2 4">
    <location>
        <position position="165"/>
    </location>
    <ligand>
        <name>heme c</name>
        <dbReference type="ChEBI" id="CHEBI:61717"/>
        <label>2</label>
    </ligand>
</feature>
<feature type="binding site" description="covalent" evidence="2 4">
    <location>
        <position position="168"/>
    </location>
    <ligand>
        <name>heme c</name>
        <dbReference type="ChEBI" id="CHEBI:61717"/>
        <label>2</label>
    </ligand>
</feature>
<feature type="binding site" description="axial binding residue" evidence="2 4">
    <location>
        <position position="169"/>
    </location>
    <ligand>
        <name>heme c</name>
        <dbReference type="ChEBI" id="CHEBI:61717"/>
        <label>2</label>
    </ligand>
    <ligandPart>
        <name>Fe</name>
        <dbReference type="ChEBI" id="CHEBI:18248"/>
    </ligandPart>
</feature>
<feature type="binding site" evidence="2">
    <location>
        <position position="210"/>
    </location>
    <ligand>
        <name>substrate</name>
    </ligand>
</feature>
<feature type="binding site" description="axial binding residue" evidence="2 4">
    <location>
        <position position="214"/>
    </location>
    <ligand>
        <name>heme c</name>
        <dbReference type="ChEBI" id="CHEBI:61717"/>
        <label>2</label>
    </ligand>
    <ligandPart>
        <name>Fe</name>
        <dbReference type="ChEBI" id="CHEBI:18248"/>
    </ligandPart>
</feature>
<evidence type="ECO:0000250" key="1">
    <source>
        <dbReference type="UniProtKB" id="O33434"/>
    </source>
</evidence>
<evidence type="ECO:0000250" key="2">
    <source>
        <dbReference type="UniProtKB" id="Q939U1"/>
    </source>
</evidence>
<evidence type="ECO:0000255" key="3"/>
<evidence type="ECO:0000255" key="4">
    <source>
        <dbReference type="PROSITE-ProRule" id="PRU00433"/>
    </source>
</evidence>
<evidence type="ECO:0000269" key="5">
    <source>
    </source>
</evidence>
<evidence type="ECO:0000303" key="6">
    <source>
    </source>
</evidence>
<evidence type="ECO:0000305" key="7"/>
<evidence type="ECO:0000312" key="8">
    <source>
        <dbReference type="EMBL" id="ADO45889.1"/>
    </source>
</evidence>
<evidence type="ECO:0000312" key="9">
    <source>
        <dbReference type="EMBL" id="BAI69966.1"/>
    </source>
</evidence>
<protein>
    <recommendedName>
        <fullName evidence="7">L-cysteine S-thiosulfotransferase subunit SoxA</fullName>
        <ecNumber evidence="5">2.8.5.2</ecNumber>
    </recommendedName>
    <alternativeName>
        <fullName evidence="1 9">Cytochrome c551 subunit diheme</fullName>
    </alternativeName>
    <alternativeName>
        <fullName evidence="6">Protein SoxA1</fullName>
    </alternativeName>
    <alternativeName>
        <fullName>SoxAX cytochrome complex subunit A1</fullName>
    </alternativeName>
    <alternativeName>
        <fullName evidence="6 8">Sulfur oxidizing protein A1</fullName>
    </alternativeName>
    <alternativeName>
        <fullName>Thiosulfate-oxidizing multienzyme system protein SoxA1</fullName>
        <shortName>TOMES protein SoxA1</shortName>
    </alternativeName>
</protein>
<sequence length="253" mass="29025">MGKWVTIIFVLFLYAIAQQENPAEEVKKQKELLLKEMGILPGDVYAEQGRDMFNKPMGNAGKSCSSCHGQDGRYLRGAYAHMPRYYKDMDAVADLDTRIKYCMEKYMGVGNVKHDLNFKSIATYVATLSNGMKMDVKLTHPKEREMYEKGRELWYARVGKMDFSCAICHDSEAGKRVFLQTVVAVKEDKVATHWPAYRFSNDQLWTMEDRIRGCFGDMRVAPPEHFHWAVVALNLYLSYKAKGGVVRVPGFIY</sequence>
<name>SOXA1_HYDTT</name>
<gene>
    <name evidence="9" type="primary">soxA1</name>
    <name type="ordered locus">HTH_1517</name>
    <name type="ordered locus">Hydth_1505</name>
</gene>
<dbReference type="EC" id="2.8.5.2" evidence="5"/>
<dbReference type="EMBL" id="AP011112">
    <property type="protein sequence ID" value="BAI69966.1"/>
    <property type="molecule type" value="Genomic_DNA"/>
</dbReference>
<dbReference type="EMBL" id="CP002221">
    <property type="protein sequence ID" value="ADO45889.1"/>
    <property type="molecule type" value="Genomic_DNA"/>
</dbReference>
<dbReference type="RefSeq" id="WP_012964146.1">
    <property type="nucleotide sequence ID" value="NC_013799.1"/>
</dbReference>
<dbReference type="SMR" id="D3DJG4"/>
<dbReference type="STRING" id="608538.HTH_1517"/>
<dbReference type="KEGG" id="hte:Hydth_1505"/>
<dbReference type="KEGG" id="hth:HTH_1517"/>
<dbReference type="eggNOG" id="COG3258">
    <property type="taxonomic scope" value="Bacteria"/>
</dbReference>
<dbReference type="HOGENOM" id="CLU_079910_0_0_0"/>
<dbReference type="OrthoDB" id="9808312at2"/>
<dbReference type="Proteomes" id="UP000002574">
    <property type="component" value="Chromosome"/>
</dbReference>
<dbReference type="GO" id="GO:0070069">
    <property type="term" value="C:cytochrome complex"/>
    <property type="evidence" value="ECO:0007669"/>
    <property type="project" value="InterPro"/>
</dbReference>
<dbReference type="GO" id="GO:0042597">
    <property type="term" value="C:periplasmic space"/>
    <property type="evidence" value="ECO:0007669"/>
    <property type="project" value="UniProtKB-SubCell"/>
</dbReference>
<dbReference type="GO" id="GO:0009055">
    <property type="term" value="F:electron transfer activity"/>
    <property type="evidence" value="ECO:0000317"/>
    <property type="project" value="UniProtKB"/>
</dbReference>
<dbReference type="GO" id="GO:0020037">
    <property type="term" value="F:heme binding"/>
    <property type="evidence" value="ECO:0007669"/>
    <property type="project" value="InterPro"/>
</dbReference>
<dbReference type="GO" id="GO:0046872">
    <property type="term" value="F:metal ion binding"/>
    <property type="evidence" value="ECO:0007669"/>
    <property type="project" value="UniProtKB-KW"/>
</dbReference>
<dbReference type="GO" id="GO:0016491">
    <property type="term" value="F:oxidoreductase activity"/>
    <property type="evidence" value="ECO:0000317"/>
    <property type="project" value="UniProtKB"/>
</dbReference>
<dbReference type="GO" id="GO:0016669">
    <property type="term" value="F:oxidoreductase activity, acting on a sulfur group of donors, cytochrome as acceptor"/>
    <property type="evidence" value="ECO:0000317"/>
    <property type="project" value="UniProtKB"/>
</dbReference>
<dbReference type="GO" id="GO:0016740">
    <property type="term" value="F:transferase activity"/>
    <property type="evidence" value="ECO:0007669"/>
    <property type="project" value="UniProtKB-KW"/>
</dbReference>
<dbReference type="GO" id="GO:0019417">
    <property type="term" value="P:sulfur oxidation"/>
    <property type="evidence" value="ECO:0000317"/>
    <property type="project" value="UniProtKB"/>
</dbReference>
<dbReference type="FunFam" id="1.10.760.10:FF:000082">
    <property type="entry name" value="L-cysteine S-thiosulfotransferase subunit SoxA"/>
    <property type="match status" value="1"/>
</dbReference>
<dbReference type="Gene3D" id="1.10.760.10">
    <property type="entry name" value="Cytochrome c-like domain"/>
    <property type="match status" value="2"/>
</dbReference>
<dbReference type="InterPro" id="IPR009056">
    <property type="entry name" value="Cyt_c-like_dom"/>
</dbReference>
<dbReference type="InterPro" id="IPR036909">
    <property type="entry name" value="Cyt_c-like_dom_sf"/>
</dbReference>
<dbReference type="InterPro" id="IPR025710">
    <property type="entry name" value="SoxA"/>
</dbReference>
<dbReference type="NCBIfam" id="TIGR04484">
    <property type="entry name" value="thiosulf_SoxA"/>
    <property type="match status" value="1"/>
</dbReference>
<dbReference type="Pfam" id="PF21342">
    <property type="entry name" value="SoxA-TsdA_cyt-c"/>
    <property type="match status" value="1"/>
</dbReference>
<dbReference type="PIRSF" id="PIRSF038455">
    <property type="entry name" value="SoxA"/>
    <property type="match status" value="1"/>
</dbReference>
<dbReference type="SUPFAM" id="SSF46626">
    <property type="entry name" value="Cytochrome c"/>
    <property type="match status" value="2"/>
</dbReference>
<dbReference type="PROSITE" id="PS51007">
    <property type="entry name" value="CYTC"/>
    <property type="match status" value="1"/>
</dbReference>
<organism>
    <name type="scientific">Hydrogenobacter thermophilus (strain DSM 6534 / IAM 12695 / TK-6)</name>
    <dbReference type="NCBI Taxonomy" id="608538"/>
    <lineage>
        <taxon>Bacteria</taxon>
        <taxon>Pseudomonadati</taxon>
        <taxon>Aquificota</taxon>
        <taxon>Aquificia</taxon>
        <taxon>Aquificales</taxon>
        <taxon>Aquificaceae</taxon>
        <taxon>Hydrogenobacter</taxon>
    </lineage>
</organism>
<keyword id="KW-0249">Electron transport</keyword>
<keyword id="KW-0349">Heme</keyword>
<keyword id="KW-0408">Iron</keyword>
<keyword id="KW-0479">Metal-binding</keyword>
<keyword id="KW-0574">Periplasm</keyword>
<keyword id="KW-1185">Reference proteome</keyword>
<keyword id="KW-0732">Signal</keyword>
<keyword id="KW-0808">Transferase</keyword>
<keyword id="KW-0813">Transport</keyword>
<proteinExistence type="evidence at protein level"/>
<comment type="function">
    <text evidence="1 5">C-type diheme cytochrome, which is part of the SoxAX cytochrome complex involved in sulfur oxidation. The SoxAX complex catalyzes the formation of a heterodisulfide bond between the conserved cysteine residue on a sulfur carrier SoxYZ complex subunit SoxY and thiosulfate or other inorganic sulfur substrates. This leads to the liberation of two electrons, which may be transferred from the SoxAX complex to another cytochrome c that then channels them into the respiratory electron transport chain. Some electrons may be used for reductive CO(2) fixation.</text>
</comment>
<comment type="catalytic activity">
    <reaction evidence="5">
        <text>L-cysteinyl-[SoxY protein] + thiosulfate + 2 Fe(III)-[cytochrome c] = S-sulfosulfanyl-L-cysteinyl-[SoxY protein] + 2 Fe(II)-[cytochrome c] + 2 H(+)</text>
        <dbReference type="Rhea" id="RHEA:56720"/>
        <dbReference type="Rhea" id="RHEA-COMP:10350"/>
        <dbReference type="Rhea" id="RHEA-COMP:14328"/>
        <dbReference type="Rhea" id="RHEA-COMP:14399"/>
        <dbReference type="Rhea" id="RHEA-COMP:14691"/>
        <dbReference type="ChEBI" id="CHEBI:15378"/>
        <dbReference type="ChEBI" id="CHEBI:29033"/>
        <dbReference type="ChEBI" id="CHEBI:29034"/>
        <dbReference type="ChEBI" id="CHEBI:29950"/>
        <dbReference type="ChEBI" id="CHEBI:33542"/>
        <dbReference type="ChEBI" id="CHEBI:139321"/>
        <dbReference type="EC" id="2.8.5.2"/>
    </reaction>
</comment>
<comment type="catalytic activity">
    <reaction evidence="5">
        <text>S-sulfanyl-L-cysteinyl-[SoxY protein] + thiosulfate + 2 Fe(III)-[cytochrome c] = S-(2-sulfodisulfanyl)-L-cysteinyl-[SoxY protein] + 2 Fe(II)-[cytochrome c] + 2 H(+)</text>
        <dbReference type="Rhea" id="RHEA:51224"/>
        <dbReference type="Rhea" id="RHEA-COMP:10350"/>
        <dbReference type="Rhea" id="RHEA-COMP:14399"/>
        <dbReference type="Rhea" id="RHEA-COMP:14689"/>
        <dbReference type="Rhea" id="RHEA-COMP:14690"/>
        <dbReference type="ChEBI" id="CHEBI:15378"/>
        <dbReference type="ChEBI" id="CHEBI:29033"/>
        <dbReference type="ChEBI" id="CHEBI:29034"/>
        <dbReference type="ChEBI" id="CHEBI:33542"/>
        <dbReference type="ChEBI" id="CHEBI:61963"/>
        <dbReference type="ChEBI" id="CHEBI:140664"/>
        <dbReference type="EC" id="2.8.5.2"/>
    </reaction>
</comment>
<comment type="cofactor">
    <cofactor evidence="1">
        <name>heme c</name>
        <dbReference type="ChEBI" id="CHEBI:61717"/>
    </cofactor>
    <text evidence="1">Binds 2 heme c groups covalently per subunit.</text>
</comment>
<comment type="subunit">
    <text evidence="1">Heterodimer of SoxA and SoxX.</text>
</comment>
<comment type="subcellular location">
    <subcellularLocation>
        <location evidence="1">Periplasm</location>
    </subcellularLocation>
</comment>
<comment type="PTM">
    <text evidence="1">Cysteine persulfide at Cys-214.</text>
</comment>
<comment type="similarity">
    <text evidence="3">Belongs to the SoxA family.</text>
</comment>
<accession>D3DJG4</accession>
<reference evidence="9" key="1">
    <citation type="journal article" date="2010" name="J. Bacteriol.">
        <title>Complete genome sequence of the thermophilic, obligately chemolithoautotrophic hydrogen-oxidizing bacterium Hydrogenobacter thermophilus TK-6.</title>
        <authorList>
            <person name="Arai H."/>
            <person name="Kanbe H."/>
            <person name="Ishii M."/>
            <person name="Igarashi Y."/>
        </authorList>
    </citation>
    <scope>NUCLEOTIDE SEQUENCE [LARGE SCALE GENOMIC DNA]</scope>
    <source>
        <strain>DSM 6534 / IAM 12695 / TK-6</strain>
    </source>
</reference>
<reference key="2">
    <citation type="journal article" date="2011" name="Stand. Genomic Sci.">
        <title>Complete genome sequence of Hydrogenobacter thermophilus type strain (TK-6).</title>
        <authorList>
            <consortium name="US DOE Joint Genome Institute (JGI-PGF)"/>
            <person name="Zeytun A."/>
            <person name="Sikorski J."/>
            <person name="Nolan M."/>
            <person name="Lapidus A."/>
            <person name="Lucas S."/>
            <person name="Han J."/>
            <person name="Tice H."/>
            <person name="Cheng J.F."/>
            <person name="Tapia R."/>
            <person name="Goodwin L."/>
            <person name="Pitluck S."/>
            <person name="Liolios K."/>
            <person name="Ivanova N."/>
            <person name="Mavromatis K."/>
            <person name="Mikhailova N."/>
            <person name="Ovchinnikova G."/>
            <person name="Pati A."/>
            <person name="Chen A."/>
            <person name="Palaniappan K."/>
            <person name="Ngatchou-Djao O.D."/>
            <person name="Land M."/>
            <person name="Hauser L."/>
            <person name="Jeffries C.D."/>
            <person name="Han C."/>
            <person name="Detter J.C."/>
            <person name="Ubler S."/>
            <person name="Rohde M."/>
            <person name="Tindall B.J."/>
            <person name="Goker M."/>
            <person name="Wirth R."/>
            <person name="Woyke T."/>
            <person name="Bristow J."/>
            <person name="Eisen J.A."/>
            <person name="Markowitz V."/>
            <person name="Hugenholtz P."/>
            <person name="Klenk H.P."/>
            <person name="Kyrpides N.C."/>
        </authorList>
    </citation>
    <scope>NUCLEOTIDE SEQUENCE [LARGE SCALE GENOMIC DNA]</scope>
    <source>
        <strain>DSM 6534 / IAM 12695 / TK-6</strain>
    </source>
</reference>
<reference evidence="7" key="3">
    <citation type="journal article" date="2010" name="Biosci. Biotechnol. Biochem.">
        <title>Thiosulfate oxidation by a thermo-neutrophilic hydrogen-oxidizing bacterium, Hydrogenobacter thermophilus.</title>
        <authorList>
            <person name="Sano R."/>
            <person name="Kameya M."/>
            <person name="Wakai S."/>
            <person name="Arai H."/>
            <person name="Igarashi Y."/>
            <person name="Ishii M."/>
            <person name="Sambongi Y."/>
        </authorList>
    </citation>
    <scope>PROBABLE FUNCTION</scope>
    <scope>CATALYTIC ACTIVITY</scope>
    <source>
        <strain evidence="5">DSM 6534 / IAM 12695 / TK-6</strain>
    </source>
</reference>